<sequence length="138" mass="15835">MQPIIKGAVSSTFKRALYNFGIKEKKSVNIEMGRTQQTKKIDQSLSKKLPKGTIYDPFDFSMGRIHLDRKYQANKNSNRNDIMKSGANPLEFYARPRILSRYVTSTGRIQHRDITGLSAKNQRRLSKAIRRCQAIGLM</sequence>
<feature type="transit peptide" description="Mitochondrion" evidence="2">
    <location>
        <begin position="1"/>
        <end status="unknown"/>
    </location>
</feature>
<feature type="chain" id="PRO_0000377630" description="Small ribosomal subunit protein bS18m">
    <location>
        <begin status="unknown"/>
        <end position="138"/>
    </location>
</feature>
<dbReference type="EMBL" id="ABSV01000670">
    <property type="protein sequence ID" value="EDZ72612.1"/>
    <property type="status" value="ALT_INIT"/>
    <property type="molecule type" value="Genomic_DNA"/>
</dbReference>
<dbReference type="SMR" id="B5VHI3"/>
<dbReference type="OrthoDB" id="4526at4893"/>
<dbReference type="Proteomes" id="UP000008988">
    <property type="component" value="Unassembled WGS sequence"/>
</dbReference>
<dbReference type="GO" id="GO:0005763">
    <property type="term" value="C:mitochondrial small ribosomal subunit"/>
    <property type="evidence" value="ECO:0007669"/>
    <property type="project" value="TreeGrafter"/>
</dbReference>
<dbReference type="GO" id="GO:0070181">
    <property type="term" value="F:small ribosomal subunit rRNA binding"/>
    <property type="evidence" value="ECO:0007669"/>
    <property type="project" value="TreeGrafter"/>
</dbReference>
<dbReference type="GO" id="GO:0003735">
    <property type="term" value="F:structural constituent of ribosome"/>
    <property type="evidence" value="ECO:0007669"/>
    <property type="project" value="InterPro"/>
</dbReference>
<dbReference type="GO" id="GO:0032543">
    <property type="term" value="P:mitochondrial translation"/>
    <property type="evidence" value="ECO:0007669"/>
    <property type="project" value="TreeGrafter"/>
</dbReference>
<dbReference type="FunFam" id="4.10.640.10:FF:000020">
    <property type="entry name" value="37S ribosomal protein RSM18, mitochondrial"/>
    <property type="match status" value="1"/>
</dbReference>
<dbReference type="Gene3D" id="4.10.640.10">
    <property type="entry name" value="Ribosomal protein S18"/>
    <property type="match status" value="1"/>
</dbReference>
<dbReference type="InterPro" id="IPR001648">
    <property type="entry name" value="Ribosomal_bS18"/>
</dbReference>
<dbReference type="InterPro" id="IPR036870">
    <property type="entry name" value="Ribosomal_bS18_sf"/>
</dbReference>
<dbReference type="PANTHER" id="PTHR13479">
    <property type="entry name" value="30S RIBOSOMAL PROTEIN S18"/>
    <property type="match status" value="1"/>
</dbReference>
<dbReference type="PANTHER" id="PTHR13479:SF40">
    <property type="entry name" value="SMALL RIBOSOMAL SUBUNIT PROTEIN BS18M"/>
    <property type="match status" value="1"/>
</dbReference>
<dbReference type="Pfam" id="PF01084">
    <property type="entry name" value="Ribosomal_S18"/>
    <property type="match status" value="1"/>
</dbReference>
<dbReference type="PRINTS" id="PR00974">
    <property type="entry name" value="RIBOSOMALS18"/>
</dbReference>
<dbReference type="SUPFAM" id="SSF46911">
    <property type="entry name" value="Ribosomal protein S18"/>
    <property type="match status" value="1"/>
</dbReference>
<proteinExistence type="inferred from homology"/>
<reference key="1">
    <citation type="journal article" date="2008" name="FEMS Yeast Res.">
        <title>Comparative genome analysis of a Saccharomyces cerevisiae wine strain.</title>
        <authorList>
            <person name="Borneman A.R."/>
            <person name="Forgan A.H."/>
            <person name="Pretorius I.S."/>
            <person name="Chambers P.J."/>
        </authorList>
    </citation>
    <scope>NUCLEOTIDE SEQUENCE [LARGE SCALE GENOMIC DNA]</scope>
    <source>
        <strain>AWRI1631</strain>
    </source>
</reference>
<organism>
    <name type="scientific">Saccharomyces cerevisiae (strain AWRI1631)</name>
    <name type="common">Baker's yeast</name>
    <dbReference type="NCBI Taxonomy" id="545124"/>
    <lineage>
        <taxon>Eukaryota</taxon>
        <taxon>Fungi</taxon>
        <taxon>Dikarya</taxon>
        <taxon>Ascomycota</taxon>
        <taxon>Saccharomycotina</taxon>
        <taxon>Saccharomycetes</taxon>
        <taxon>Saccharomycetales</taxon>
        <taxon>Saccharomycetaceae</taxon>
        <taxon>Saccharomyces</taxon>
    </lineage>
</organism>
<gene>
    <name type="primary">RSM18</name>
    <name type="ORF">AWRI1631_51220</name>
</gene>
<comment type="subunit">
    <text evidence="1">Component of the mitochondrial small ribosomal subunit. Mature mitochondrial ribosomes consist of a small (37S) and a large (54S) subunit. The 37S subunit contains at least 33 different proteins and 1 molecule of RNA (15S). The 54S subunit contains at least 45 different proteins and 1 molecule of RNA (21S) (By similarity).</text>
</comment>
<comment type="subcellular location">
    <subcellularLocation>
        <location evidence="1">Mitochondrion</location>
    </subcellularLocation>
</comment>
<comment type="similarity">
    <text evidence="3">Belongs to the bacterial ribosomal protein bS18 family.</text>
</comment>
<comment type="sequence caution" evidence="3">
    <conflict type="erroneous initiation">
        <sequence resource="EMBL-CDS" id="EDZ72612"/>
    </conflict>
</comment>
<evidence type="ECO:0000250" key="1"/>
<evidence type="ECO:0000255" key="2"/>
<evidence type="ECO:0000305" key="3"/>
<protein>
    <recommendedName>
        <fullName evidence="3">Small ribosomal subunit protein bS18m</fullName>
    </recommendedName>
    <alternativeName>
        <fullName>37S ribosomal protein RSM18, mitochondrial</fullName>
    </alternativeName>
</protein>
<name>RSM18_YEAS6</name>
<accession>B5VHI3</accession>
<keyword id="KW-0496">Mitochondrion</keyword>
<keyword id="KW-0687">Ribonucleoprotein</keyword>
<keyword id="KW-0689">Ribosomal protein</keyword>
<keyword id="KW-0809">Transit peptide</keyword>